<evidence type="ECO:0000250" key="1">
    <source>
        <dbReference type="UniProtKB" id="Q80TQ2"/>
    </source>
</evidence>
<evidence type="ECO:0000250" key="2">
    <source>
        <dbReference type="UniProtKB" id="Q9NQC7"/>
    </source>
</evidence>
<evidence type="ECO:0000255" key="3">
    <source>
        <dbReference type="PROSITE-ProRule" id="PRU00045"/>
    </source>
</evidence>
<evidence type="ECO:0000255" key="4">
    <source>
        <dbReference type="PROSITE-ProRule" id="PRU10092"/>
    </source>
</evidence>
<evidence type="ECO:0000256" key="5">
    <source>
        <dbReference type="SAM" id="MobiDB-lite"/>
    </source>
</evidence>
<evidence type="ECO:0000305" key="6"/>
<gene>
    <name type="primary">CYLD</name>
    <name type="synonym">CYLD1</name>
</gene>
<feature type="chain" id="PRO_0000326147" description="Ubiquitin carboxyl-terminal hydrolase CYLD">
    <location>
        <begin position="1"/>
        <end position="953"/>
    </location>
</feature>
<feature type="domain" description="CAP-Gly 1" evidence="3">
    <location>
        <begin position="153"/>
        <end position="198"/>
    </location>
</feature>
<feature type="domain" description="CAP-Gly 2" evidence="3">
    <location>
        <begin position="253"/>
        <end position="286"/>
    </location>
</feature>
<feature type="domain" description="CAP-Gly 3" evidence="3">
    <location>
        <begin position="489"/>
        <end position="532"/>
    </location>
</feature>
<feature type="domain" description="USP">
    <location>
        <begin position="589"/>
        <end position="947"/>
    </location>
</feature>
<feature type="region of interest" description="Interaction with TRIP" evidence="2">
    <location>
        <begin position="106"/>
        <end position="590"/>
    </location>
</feature>
<feature type="region of interest" description="Disordered" evidence="5">
    <location>
        <begin position="313"/>
        <end position="349"/>
    </location>
</feature>
<feature type="region of interest" description="Disordered" evidence="5">
    <location>
        <begin position="384"/>
        <end position="410"/>
    </location>
</feature>
<feature type="region of interest" description="Interaction with TRAF2" evidence="2">
    <location>
        <begin position="391"/>
        <end position="466"/>
    </location>
</feature>
<feature type="region of interest" description="Interaction with IKBKG/NEMO" evidence="2">
    <location>
        <begin position="467"/>
        <end position="681"/>
    </location>
</feature>
<feature type="region of interest" description="B-box" evidence="2">
    <location>
        <begin position="778"/>
        <end position="830"/>
    </location>
</feature>
<feature type="compositionally biased region" description="Polar residues" evidence="5">
    <location>
        <begin position="337"/>
        <end position="346"/>
    </location>
</feature>
<feature type="active site" description="Nucleophile" evidence="4">
    <location>
        <position position="598"/>
    </location>
</feature>
<feature type="active site" description="Proton acceptor" evidence="4">
    <location>
        <position position="868"/>
    </location>
</feature>
<feature type="binding site" evidence="2">
    <location>
        <position position="785"/>
    </location>
    <ligand>
        <name>Zn(2+)</name>
        <dbReference type="ChEBI" id="CHEBI:29105"/>
        <label>1</label>
    </ligand>
</feature>
<feature type="binding site" evidence="2">
    <location>
        <position position="788"/>
    </location>
    <ligand>
        <name>Zn(2+)</name>
        <dbReference type="ChEBI" id="CHEBI:29105"/>
        <label>1</label>
    </ligand>
</feature>
<feature type="binding site" evidence="2">
    <location>
        <position position="796"/>
    </location>
    <ligand>
        <name>Zn(2+)</name>
        <dbReference type="ChEBI" id="CHEBI:29105"/>
        <label>2</label>
    </ligand>
</feature>
<feature type="binding site" evidence="2">
    <location>
        <position position="799"/>
    </location>
    <ligand>
        <name>Zn(2+)</name>
        <dbReference type="ChEBI" id="CHEBI:29105"/>
        <label>2</label>
    </ligand>
</feature>
<feature type="binding site" evidence="2">
    <location>
        <position position="814"/>
    </location>
    <ligand>
        <name>Zn(2+)</name>
        <dbReference type="ChEBI" id="CHEBI:29105"/>
        <label>1</label>
    </ligand>
</feature>
<feature type="binding site" evidence="2">
    <location>
        <position position="817"/>
    </location>
    <ligand>
        <name>Zn(2+)</name>
        <dbReference type="ChEBI" id="CHEBI:29105"/>
        <label>1</label>
    </ligand>
</feature>
<feature type="binding site" evidence="2">
    <location>
        <position position="822"/>
    </location>
    <ligand>
        <name>Zn(2+)</name>
        <dbReference type="ChEBI" id="CHEBI:29105"/>
        <label>2</label>
    </ligand>
</feature>
<feature type="binding site" evidence="2">
    <location>
        <position position="830"/>
    </location>
    <ligand>
        <name>Zn(2+)</name>
        <dbReference type="ChEBI" id="CHEBI:29105"/>
        <label>2</label>
    </ligand>
</feature>
<feature type="modified residue" description="Phosphoserine" evidence="2">
    <location>
        <position position="384"/>
    </location>
</feature>
<feature type="modified residue" description="Phosphoserine" evidence="2">
    <location>
        <position position="415"/>
    </location>
</feature>
<feature type="modified residue" description="Phosphoserine" evidence="2">
    <location>
        <position position="419"/>
    </location>
</feature>
<comment type="function">
    <text evidence="1 2">Deubiquitinase that specifically cleaves 'Lys-63'- and linear 'Met-1'-linked polyubiquitin chains and is involved in NF-kappa-B activation and TNF-alpha-induced necroptosis. Negatively regulates NF-kappa-B activation by deubiquitinating upstream signaling factors. Contributes to the regulation of cell survival, proliferation and differentiation via its effects on NF-kappa-B activation. Negative regulator of Wnt signaling. Inhibits HDAC6 and thereby promotes acetylation of alpha-tubulin and stabilization of microtubules. Plays a role in the regulation of microtubule dynamics, and thereby contributes to the regulation of cell proliferation, cell polarization, cell migration, and angiogenesis. Required for normal cell cycle progress and normal cytokinesis. Inhibits nuclear translocation of NF-kappa-B. Plays a role in the regulation of inflammation and the innate immune response, via its effects on NF-kappa-B activation (By similarity). Dispensable for the maturation of intrathymic natural killer cells, but required for the continued survival of immature natural killer cells. Negatively regulates TNFRSF11A signaling and osteoclastogenesis. Involved in the regulation of ciliogenesis, allowing ciliary basal bodies to migrate and dock to the plasma membrane; this process does not depend on NF-kappa-B activation (By similarity). Ability to remove linear ('Met-1'-linked) polyubiquitin chains regulates innate immunity and TNF-alpha-induced necroptosis: recruited to the LUBAC complex via interaction with SPATA2 and restricts linear polyubiquitin formation on target proteins. Regulates innate immunity by restricting linear polyubiquitin formation on RIPK2 in response to NOD2 stimulation (By similarity). Involved in TNF-alpha-induced necroptosis by removing linear ('Met-1'-linked) polyubiquitin chains from RIPK1, thereby regulating the kinase activity of RIPK1 (By similarity). Negatively regulates intestinal inflammation by removing 'Lys-63' linked polyubiquitin chain of NLRP6, thereby reducing the interaction between NLRP6 and PYCARD/ASC and formation of the NLRP6 inflammasome (By similarity). Does not catalyze deubiquitination of heterotypic 'Lys-63'-/'Lys-48'-linked branched ubiquitin chains (By similarity). Removes 'Lys-63' linked polyubiquitin chain of MAP3K7, which inhibits phosphorylation and blocks downstream activation of the JNK-p38 kinase cascades (By similarity). Also removes 'Lys-63'-linked polyubiquitin chains of MAP3K1 and MA3P3K3, which inhibit their interaction with MAP2K1 and MAP2K2 (By similarity).</text>
</comment>
<comment type="catalytic activity">
    <reaction evidence="2">
        <text>Thiol-dependent hydrolysis of ester, thioester, amide, peptide and isopeptide bonds formed by the C-terminal Gly of ubiquitin (a 76-residue protein attached to proteins as an intracellular targeting signal).</text>
        <dbReference type="EC" id="3.4.19.12"/>
    </reaction>
</comment>
<comment type="subunit">
    <text evidence="1 2">Interacts (via CAP-Gly domain) with IKBKG/NEMO (via proline-rich C-terminal region). Interacts with TRAF2 and TRIP. Interacts with PLK1, DVL1, DVL3, MAVS, TBK1, IKKE and RIGI. Interacts (via CAP-Gly domain) with microtubules. Interacts with HDAC6 and BCL3 (By similarity). Interacts with MAP3K7. Identified in a complex with TRAF6 and SQSTM1 (By similarity). Interacts with OPTN and SQSTM1 (By similarity). Interacts with CEP350. Interacts with RNF31; the interaction is indirect and is mediated via SPATA2. Interacts with SPATA2 (via the PUB domain); the interaction is direct and recruits CYLD to the LUBAC complex, thereby regulating TNF-alpha-induced necroptosis (By similarity).</text>
</comment>
<comment type="subcellular location">
    <subcellularLocation>
        <location>Cytoplasm</location>
    </subcellularLocation>
    <subcellularLocation>
        <location>Cytoplasm</location>
        <location>Perinuclear region</location>
    </subcellularLocation>
    <subcellularLocation>
        <location>Cytoplasm</location>
        <location>Cytoskeleton</location>
    </subcellularLocation>
    <subcellularLocation>
        <location evidence="2">Cell membrane</location>
        <topology evidence="2">Peripheral membrane protein</topology>
        <orientation evidence="2">Cytoplasmic side</orientation>
    </subcellularLocation>
    <subcellularLocation>
        <location evidence="2">Cytoplasm</location>
        <location evidence="2">Cytoskeleton</location>
        <location evidence="2">Microtubule organizing center</location>
        <location evidence="2">Centrosome</location>
    </subcellularLocation>
    <subcellularLocation>
        <location evidence="2">Cytoplasm</location>
        <location evidence="2">Cytoskeleton</location>
        <location evidence="2">Spindle</location>
    </subcellularLocation>
    <subcellularLocation>
        <location evidence="1">Cytoplasm</location>
        <location evidence="1">Cytoskeleton</location>
        <location evidence="1">Cilium basal body</location>
    </subcellularLocation>
    <text evidence="1 2">Detected at the microtubule cytoskeleton during interphase (By similarity). Detected at the midbody during telophase (By similarity). During metaphase, it remains localized to the centrosome but is also present along the spindle (By similarity).</text>
</comment>
<comment type="PTM">
    <text evidence="2">Phosphorylated on several serine residues by IKKA and/or IKKB in response to immune stimuli. Phosphorylation requires IKBKG. Phosphorylation abolishes TRAF2 deubiquitination, interferes with the activation of Jun kinases, and strongly reduces CD40-dependent gene activation by NF-kappa-B (By similarity).</text>
</comment>
<comment type="PTM">
    <text evidence="1 2">Ubiquitinated. Polyubiquitinated in hepatocytes treated with palmitic acid. Ubiquitination is mediated by E3 ligase TRIM47 and leads to proteasomal degradation.</text>
</comment>
<comment type="similarity">
    <text evidence="6">Belongs to the peptidase C19 family.</text>
</comment>
<reference key="1">
    <citation type="submission" date="2006-04" db="EMBL/GenBank/DDBJ databases">
        <authorList>
            <consortium name="NIH - Mammalian Gene Collection (MGC) project"/>
        </authorList>
    </citation>
    <scope>NUCLEOTIDE SEQUENCE [LARGE SCALE MRNA]</scope>
    <source>
        <strain>Hereford</strain>
        <tissue>Uterus</tissue>
    </source>
</reference>
<name>CYLD_BOVIN</name>
<dbReference type="EC" id="3.4.19.12" evidence="2"/>
<dbReference type="EMBL" id="BC114710">
    <property type="protein sequence ID" value="AAI14711.1"/>
    <property type="molecule type" value="mRNA"/>
</dbReference>
<dbReference type="RefSeq" id="NP_001039882.1">
    <property type="nucleotide sequence ID" value="NM_001046417.1"/>
</dbReference>
<dbReference type="RefSeq" id="XP_005218741.1">
    <property type="nucleotide sequence ID" value="XM_005218684.4"/>
</dbReference>
<dbReference type="RefSeq" id="XP_010812839.1">
    <property type="nucleotide sequence ID" value="XM_010814537.2"/>
</dbReference>
<dbReference type="RefSeq" id="XP_024834167.1">
    <property type="nucleotide sequence ID" value="XM_024978399.2"/>
</dbReference>
<dbReference type="RefSeq" id="XP_024834168.1">
    <property type="nucleotide sequence ID" value="XM_024978400.2"/>
</dbReference>
<dbReference type="RefSeq" id="XP_059732819.1">
    <property type="nucleotide sequence ID" value="XM_059876836.1"/>
</dbReference>
<dbReference type="RefSeq" id="XP_059732820.1">
    <property type="nucleotide sequence ID" value="XM_059876837.1"/>
</dbReference>
<dbReference type="RefSeq" id="XP_059732821.1">
    <property type="nucleotide sequence ID" value="XM_059876838.1"/>
</dbReference>
<dbReference type="SMR" id="Q1RMU2"/>
<dbReference type="FunCoup" id="Q1RMU2">
    <property type="interactions" value="2702"/>
</dbReference>
<dbReference type="STRING" id="9913.ENSBTAP00000008257"/>
<dbReference type="MEROPS" id="C67.001"/>
<dbReference type="PaxDb" id="9913-ENSBTAP00000008257"/>
<dbReference type="Ensembl" id="ENSBTAT00000008257.5">
    <property type="protein sequence ID" value="ENSBTAP00000008257.4"/>
    <property type="gene ID" value="ENSBTAG00000006291.6"/>
</dbReference>
<dbReference type="GeneID" id="536421"/>
<dbReference type="KEGG" id="bta:536421"/>
<dbReference type="CTD" id="1540"/>
<dbReference type="VEuPathDB" id="HostDB:ENSBTAG00000006291"/>
<dbReference type="VGNC" id="VGNC:49141">
    <property type="gene designation" value="CYLD"/>
</dbReference>
<dbReference type="eggNOG" id="KOG3556">
    <property type="taxonomic scope" value="Eukaryota"/>
</dbReference>
<dbReference type="GeneTree" id="ENSGT00390000018123"/>
<dbReference type="HOGENOM" id="CLU_003910_0_0_1"/>
<dbReference type="InParanoid" id="Q1RMU2"/>
<dbReference type="OMA" id="SPWYIDE"/>
<dbReference type="OrthoDB" id="6287070at2759"/>
<dbReference type="TreeFam" id="TF318734"/>
<dbReference type="Reactome" id="R-BTA-168638">
    <property type="pathway name" value="NOD1/2 Signaling Pathway"/>
</dbReference>
<dbReference type="Reactome" id="R-BTA-5357786">
    <property type="pathway name" value="TNFR1-induced proapoptotic signaling"/>
</dbReference>
<dbReference type="Reactome" id="R-BTA-5357905">
    <property type="pathway name" value="Regulation of TNFR1 signaling"/>
</dbReference>
<dbReference type="Reactome" id="R-BTA-5357956">
    <property type="pathway name" value="TNFR1-induced NF-kappa-B signaling pathway"/>
</dbReference>
<dbReference type="Reactome" id="R-BTA-5689880">
    <property type="pathway name" value="Ub-specific processing proteases"/>
</dbReference>
<dbReference type="Reactome" id="R-BTA-936440">
    <property type="pathway name" value="Negative regulators of DDX58/IFIH1 signaling"/>
</dbReference>
<dbReference type="Proteomes" id="UP000009136">
    <property type="component" value="Chromosome 18"/>
</dbReference>
<dbReference type="Bgee" id="ENSBTAG00000006291">
    <property type="expression patterns" value="Expressed in spermatid and 105 other cell types or tissues"/>
</dbReference>
<dbReference type="GO" id="GO:0005813">
    <property type="term" value="C:centrosome"/>
    <property type="evidence" value="ECO:0000250"/>
    <property type="project" value="UniProtKB"/>
</dbReference>
<dbReference type="GO" id="GO:0036064">
    <property type="term" value="C:ciliary basal body"/>
    <property type="evidence" value="ECO:0000250"/>
    <property type="project" value="UniProtKB"/>
</dbReference>
<dbReference type="GO" id="GO:0097542">
    <property type="term" value="C:ciliary tip"/>
    <property type="evidence" value="ECO:0000250"/>
    <property type="project" value="UniProtKB"/>
</dbReference>
<dbReference type="GO" id="GO:0005829">
    <property type="term" value="C:cytosol"/>
    <property type="evidence" value="ECO:0000250"/>
    <property type="project" value="UniProtKB"/>
</dbReference>
<dbReference type="GO" id="GO:0005874">
    <property type="term" value="C:microtubule"/>
    <property type="evidence" value="ECO:0007669"/>
    <property type="project" value="UniProtKB-KW"/>
</dbReference>
<dbReference type="GO" id="GO:0048471">
    <property type="term" value="C:perinuclear region of cytoplasm"/>
    <property type="evidence" value="ECO:0007669"/>
    <property type="project" value="UniProtKB-SubCell"/>
</dbReference>
<dbReference type="GO" id="GO:0005886">
    <property type="term" value="C:plasma membrane"/>
    <property type="evidence" value="ECO:0007669"/>
    <property type="project" value="UniProtKB-SubCell"/>
</dbReference>
<dbReference type="GO" id="GO:0005819">
    <property type="term" value="C:spindle"/>
    <property type="evidence" value="ECO:0000250"/>
    <property type="project" value="UniProtKB"/>
</dbReference>
<dbReference type="GO" id="GO:0004843">
    <property type="term" value="F:cysteine-type deubiquitinase activity"/>
    <property type="evidence" value="ECO:0000250"/>
    <property type="project" value="UniProtKB"/>
</dbReference>
<dbReference type="GO" id="GO:0061578">
    <property type="term" value="F:K63-linked deubiquitinase activity"/>
    <property type="evidence" value="ECO:0000250"/>
    <property type="project" value="UniProtKB"/>
</dbReference>
<dbReference type="GO" id="GO:0008270">
    <property type="term" value="F:zinc ion binding"/>
    <property type="evidence" value="ECO:0000250"/>
    <property type="project" value="UniProtKB"/>
</dbReference>
<dbReference type="GO" id="GO:0045087">
    <property type="term" value="P:innate immune response"/>
    <property type="evidence" value="ECO:0000250"/>
    <property type="project" value="UniProtKB"/>
</dbReference>
<dbReference type="GO" id="GO:0070266">
    <property type="term" value="P:necroptotic process"/>
    <property type="evidence" value="ECO:0000318"/>
    <property type="project" value="GO_Central"/>
</dbReference>
<dbReference type="GO" id="GO:0043124">
    <property type="term" value="P:negative regulation of canonical NF-kappaB signal transduction"/>
    <property type="evidence" value="ECO:0000250"/>
    <property type="project" value="UniProtKB"/>
</dbReference>
<dbReference type="GO" id="GO:0090090">
    <property type="term" value="P:negative regulation of canonical Wnt signaling pathway"/>
    <property type="evidence" value="ECO:0000250"/>
    <property type="project" value="UniProtKB"/>
</dbReference>
<dbReference type="GO" id="GO:0050728">
    <property type="term" value="P:negative regulation of inflammatory response"/>
    <property type="evidence" value="ECO:0000250"/>
    <property type="project" value="UniProtKB"/>
</dbReference>
<dbReference type="GO" id="GO:2000493">
    <property type="term" value="P:negative regulation of interleukin-18-mediated signaling pathway"/>
    <property type="evidence" value="ECO:0000250"/>
    <property type="project" value="UniProtKB"/>
</dbReference>
<dbReference type="GO" id="GO:0046329">
    <property type="term" value="P:negative regulation of JNK cascade"/>
    <property type="evidence" value="ECO:0000250"/>
    <property type="project" value="UniProtKB"/>
</dbReference>
<dbReference type="GO" id="GO:0032088">
    <property type="term" value="P:negative regulation of NF-kappaB transcription factor activity"/>
    <property type="evidence" value="ECO:0000250"/>
    <property type="project" value="UniProtKB"/>
</dbReference>
<dbReference type="GO" id="GO:1901223">
    <property type="term" value="P:negative regulation of non-canonical NF-kappaB signal transduction"/>
    <property type="evidence" value="ECO:0000250"/>
    <property type="project" value="UniProtKB"/>
</dbReference>
<dbReference type="GO" id="GO:1903753">
    <property type="term" value="P:negative regulation of p38MAPK cascade"/>
    <property type="evidence" value="ECO:0000250"/>
    <property type="project" value="UniProtKB"/>
</dbReference>
<dbReference type="GO" id="GO:2001238">
    <property type="term" value="P:positive regulation of extrinsic apoptotic signaling pathway"/>
    <property type="evidence" value="ECO:0000318"/>
    <property type="project" value="GO_Central"/>
</dbReference>
<dbReference type="GO" id="GO:0016579">
    <property type="term" value="P:protein deubiquitination"/>
    <property type="evidence" value="ECO:0000250"/>
    <property type="project" value="UniProtKB"/>
</dbReference>
<dbReference type="GO" id="GO:0070536">
    <property type="term" value="P:protein K63-linked deubiquitination"/>
    <property type="evidence" value="ECO:0000318"/>
    <property type="project" value="GO_Central"/>
</dbReference>
<dbReference type="GO" id="GO:1990108">
    <property type="term" value="P:protein linear deubiquitination"/>
    <property type="evidence" value="ECO:0000250"/>
    <property type="project" value="UniProtKB"/>
</dbReference>
<dbReference type="GO" id="GO:0006508">
    <property type="term" value="P:proteolysis"/>
    <property type="evidence" value="ECO:0007669"/>
    <property type="project" value="UniProtKB-KW"/>
</dbReference>
<dbReference type="GO" id="GO:1902017">
    <property type="term" value="P:regulation of cilium assembly"/>
    <property type="evidence" value="ECO:0000250"/>
    <property type="project" value="UniProtKB"/>
</dbReference>
<dbReference type="GO" id="GO:0050727">
    <property type="term" value="P:regulation of inflammatory response"/>
    <property type="evidence" value="ECO:0000250"/>
    <property type="project" value="UniProtKB"/>
</dbReference>
<dbReference type="GO" id="GO:2001242">
    <property type="term" value="P:regulation of intrinsic apoptotic signaling pathway"/>
    <property type="evidence" value="ECO:0000318"/>
    <property type="project" value="GO_Central"/>
</dbReference>
<dbReference type="GO" id="GO:0007346">
    <property type="term" value="P:regulation of mitotic cell cycle"/>
    <property type="evidence" value="ECO:0000318"/>
    <property type="project" value="GO_Central"/>
</dbReference>
<dbReference type="GO" id="GO:0010803">
    <property type="term" value="P:regulation of tumor necrosis factor-mediated signaling pathway"/>
    <property type="evidence" value="ECO:0000250"/>
    <property type="project" value="UniProtKB"/>
</dbReference>
<dbReference type="GO" id="GO:0016055">
    <property type="term" value="P:Wnt signaling pathway"/>
    <property type="evidence" value="ECO:0007669"/>
    <property type="project" value="UniProtKB-KW"/>
</dbReference>
<dbReference type="CDD" id="cd02670">
    <property type="entry name" value="Peptidase_C19N"/>
    <property type="match status" value="1"/>
</dbReference>
<dbReference type="FunFam" id="2.30.30.190:FF:000004">
    <property type="entry name" value="Putative ubiquitin carboxyl-terminal hydrolase CYLD"/>
    <property type="match status" value="1"/>
</dbReference>
<dbReference type="FunFam" id="2.30.30.190:FF:000006">
    <property type="entry name" value="Putative ubiquitin carboxyl-terminal hydrolase CYLD"/>
    <property type="match status" value="1"/>
</dbReference>
<dbReference type="FunFam" id="2.30.30.190:FF:000007">
    <property type="entry name" value="Putative ubiquitin carboxyl-terminal hydrolase CYLD"/>
    <property type="match status" value="1"/>
</dbReference>
<dbReference type="FunFam" id="3.90.70.10:FF:000009">
    <property type="entry name" value="Putative ubiquitin carboxyl-terminal hydrolase CYLD"/>
    <property type="match status" value="1"/>
</dbReference>
<dbReference type="Gene3D" id="2.30.30.190">
    <property type="entry name" value="CAP Gly-rich-like domain"/>
    <property type="match status" value="3"/>
</dbReference>
<dbReference type="Gene3D" id="3.90.70.10">
    <property type="entry name" value="Cysteine proteinases"/>
    <property type="match status" value="1"/>
</dbReference>
<dbReference type="InterPro" id="IPR036859">
    <property type="entry name" value="CAP-Gly_dom_sf"/>
</dbReference>
<dbReference type="InterPro" id="IPR000938">
    <property type="entry name" value="CAP-Gly_domain"/>
</dbReference>
<dbReference type="InterPro" id="IPR038765">
    <property type="entry name" value="Papain-like_cys_pep_sf"/>
</dbReference>
<dbReference type="InterPro" id="IPR001394">
    <property type="entry name" value="Peptidase_C19_UCH"/>
</dbReference>
<dbReference type="InterPro" id="IPR018200">
    <property type="entry name" value="USP_CS"/>
</dbReference>
<dbReference type="InterPro" id="IPR028889">
    <property type="entry name" value="USP_dom"/>
</dbReference>
<dbReference type="PANTHER" id="PTHR11830">
    <property type="entry name" value="40S RIBOSOMAL PROTEIN S3A"/>
    <property type="match status" value="1"/>
</dbReference>
<dbReference type="Pfam" id="PF01302">
    <property type="entry name" value="CAP_GLY"/>
    <property type="match status" value="2"/>
</dbReference>
<dbReference type="Pfam" id="PF16607">
    <property type="entry name" value="CYLD_phos_site"/>
    <property type="match status" value="1"/>
</dbReference>
<dbReference type="Pfam" id="PF00443">
    <property type="entry name" value="UCH"/>
    <property type="match status" value="1"/>
</dbReference>
<dbReference type="SMART" id="SM01052">
    <property type="entry name" value="CAP_GLY"/>
    <property type="match status" value="3"/>
</dbReference>
<dbReference type="SUPFAM" id="SSF74924">
    <property type="entry name" value="Cap-Gly domain"/>
    <property type="match status" value="3"/>
</dbReference>
<dbReference type="SUPFAM" id="SSF54001">
    <property type="entry name" value="Cysteine proteinases"/>
    <property type="match status" value="1"/>
</dbReference>
<dbReference type="PROSITE" id="PS00845">
    <property type="entry name" value="CAP_GLY_1"/>
    <property type="match status" value="1"/>
</dbReference>
<dbReference type="PROSITE" id="PS50245">
    <property type="entry name" value="CAP_GLY_2"/>
    <property type="match status" value="2"/>
</dbReference>
<dbReference type="PROSITE" id="PS00972">
    <property type="entry name" value="USP_1"/>
    <property type="match status" value="1"/>
</dbReference>
<dbReference type="PROSITE" id="PS50235">
    <property type="entry name" value="USP_3"/>
    <property type="match status" value="1"/>
</dbReference>
<proteinExistence type="evidence at transcript level"/>
<keyword id="KW-1003">Cell membrane</keyword>
<keyword id="KW-0966">Cell projection</keyword>
<keyword id="KW-0963">Cytoplasm</keyword>
<keyword id="KW-0206">Cytoskeleton</keyword>
<keyword id="KW-0378">Hydrolase</keyword>
<keyword id="KW-0391">Immunity</keyword>
<keyword id="KW-0399">Innate immunity</keyword>
<keyword id="KW-0472">Membrane</keyword>
<keyword id="KW-0479">Metal-binding</keyword>
<keyword id="KW-0493">Microtubule</keyword>
<keyword id="KW-0597">Phosphoprotein</keyword>
<keyword id="KW-0645">Protease</keyword>
<keyword id="KW-1185">Reference proteome</keyword>
<keyword id="KW-0677">Repeat</keyword>
<keyword id="KW-0788">Thiol protease</keyword>
<keyword id="KW-0832">Ubl conjugation</keyword>
<keyword id="KW-0833">Ubl conjugation pathway</keyword>
<keyword id="KW-0879">Wnt signaling pathway</keyword>
<keyword id="KW-0862">Zinc</keyword>
<accession>Q1RMU2</accession>
<organism>
    <name type="scientific">Bos taurus</name>
    <name type="common">Bovine</name>
    <dbReference type="NCBI Taxonomy" id="9913"/>
    <lineage>
        <taxon>Eukaryota</taxon>
        <taxon>Metazoa</taxon>
        <taxon>Chordata</taxon>
        <taxon>Craniata</taxon>
        <taxon>Vertebrata</taxon>
        <taxon>Euteleostomi</taxon>
        <taxon>Mammalia</taxon>
        <taxon>Eutheria</taxon>
        <taxon>Laurasiatheria</taxon>
        <taxon>Artiodactyla</taxon>
        <taxon>Ruminantia</taxon>
        <taxon>Pecora</taxon>
        <taxon>Bovidae</taxon>
        <taxon>Bovinae</taxon>
        <taxon>Bos</taxon>
    </lineage>
</organism>
<protein>
    <recommendedName>
        <fullName>Ubiquitin carboxyl-terminal hydrolase CYLD</fullName>
        <ecNumber evidence="2">3.4.19.12</ecNumber>
    </recommendedName>
    <alternativeName>
        <fullName>Deubiquitinating enzyme CYLD</fullName>
    </alternativeName>
    <alternativeName>
        <fullName>Ubiquitin thioesterase CYLD</fullName>
    </alternativeName>
    <alternativeName>
        <fullName>Ubiquitin-specific-processing protease CYLD</fullName>
    </alternativeName>
</protein>
<sequence>MSSGLWSQEKVTSPYWEERIFYLLLQECSVTDKQTQKLLKVPKGSIGQNIQDRSVGLSRIPSAKGKKNQIGLKILEQPHAVLFVDEKDVVEINEKFTELLLAITNCEERFSLFKNRNRLSKGLQIDVGCPVKVQLRSGEEKFPGVVRFRGPLLAERTVSGIFFGVELLEEGRGQGFTDGVYQGKQLFQCDEDCGVFVALDKLELIEDDDTGLESDYAGPVDTMQVELPPLEINSRVSLKLGETIESGTVIFCDVLPGKESLGYFVGVDMDNPIGNWDGRFDGVQLCSFASVESTILLHINDIIPESVTQERRPPKLAFMSRGVGDKGSFSHNKPKATGSTSDPGTRNRSELFYTLNGSSVDSQPQSKSKNSWYIDEVAEDPAKSLTEIPPDFGHASPPLQPPSMNSLSSENRFHSLPFSLTKMPNTNGSISHSPLSLSVQSVMGELNNAPVQESPPLAVSSGNSHGLEVGSLAEVKENPPFYGVIRWIGQPPGLNEVLAGLELEDECAGCTDGTFRGTRYFTCALKKALFVKLKSCRPDSRFASLQPVSNQIERCNSLAFGGYLSEVVEENTPPKMEKEGFEIMIGKKKGIQGHYNSCYLDSTLFCLFAFSSVLDTVLLRPKEKNDVEYYSETQELLRTEIVNPLRIYGYVCATKIMKLRKILEKVEAASGFTSEEKDPEEFLNILFHHILRVEPLLKIRSAGQKVQDCYFYQIFMEKNEKVGVPTIQQLLECSFINSNLKFAEAPSCLIIQMPRFGKDFKLFKKIFPSLELNITDLLEDTPRQCRICGGLAMYECRECYDDPDISAGKIKQFCKTCNAQVHLHPKRLNHKYNPVSLPKDLPDWDWRHGCIPCQKMELFAVLCIETSHYVAFVKYGKDDSAWLFFDSMADRDGGQNGFNIPQVTPCPEVGEYLKMSLDDLHSLDSRRIQGCARRLLCDAYMCMYQSPTMSLYK</sequence>